<evidence type="ECO:0000255" key="1">
    <source>
        <dbReference type="HAMAP-Rule" id="MF_00764"/>
    </source>
</evidence>
<comment type="similarity">
    <text evidence="1">Belongs to the UPF0306 family.</text>
</comment>
<sequence>MNNPDDVLLINRFLRQQHVLTLCAGSGMDMWCASCFYVFDENQMALFLMTEKHTRHSELMLINPQVAGTVATQSRTIALIKGIQYRGEISLLSGDAEQAARNRYCRRFPVAKVSSAPLWQLNLLEIKMTNNALGFGKKLHWSRVEPL</sequence>
<protein>
    <recommendedName>
        <fullName evidence="1">UPF0306 protein YpAngola_A4021</fullName>
    </recommendedName>
</protein>
<proteinExistence type="inferred from homology"/>
<accession>A9R5D1</accession>
<gene>
    <name type="ordered locus">YpAngola_A4021</name>
</gene>
<feature type="chain" id="PRO_1000198370" description="UPF0306 protein YpAngola_A4021">
    <location>
        <begin position="1"/>
        <end position="147"/>
    </location>
</feature>
<reference key="1">
    <citation type="journal article" date="2010" name="J. Bacteriol.">
        <title>Genome sequence of the deep-rooted Yersinia pestis strain Angola reveals new insights into the evolution and pangenome of the plague bacterium.</title>
        <authorList>
            <person name="Eppinger M."/>
            <person name="Worsham P.L."/>
            <person name="Nikolich M.P."/>
            <person name="Riley D.R."/>
            <person name="Sebastian Y."/>
            <person name="Mou S."/>
            <person name="Achtman M."/>
            <person name="Lindler L.E."/>
            <person name="Ravel J."/>
        </authorList>
    </citation>
    <scope>NUCLEOTIDE SEQUENCE [LARGE SCALE GENOMIC DNA]</scope>
    <source>
        <strain>Angola</strain>
    </source>
</reference>
<dbReference type="EMBL" id="CP000901">
    <property type="protein sequence ID" value="ABX87546.1"/>
    <property type="molecule type" value="Genomic_DNA"/>
</dbReference>
<dbReference type="RefSeq" id="WP_002209282.1">
    <property type="nucleotide sequence ID" value="NZ_CP009935.1"/>
</dbReference>
<dbReference type="SMR" id="A9R5D1"/>
<dbReference type="KEGG" id="ypg:YpAngola_A4021"/>
<dbReference type="PATRIC" id="fig|349746.12.peg.746"/>
<dbReference type="Gene3D" id="2.30.110.10">
    <property type="entry name" value="Electron Transport, Fmn-binding Protein, Chain A"/>
    <property type="match status" value="1"/>
</dbReference>
<dbReference type="HAMAP" id="MF_00764">
    <property type="entry name" value="UPF0306"/>
    <property type="match status" value="1"/>
</dbReference>
<dbReference type="InterPro" id="IPR012349">
    <property type="entry name" value="Split_barrel_FMN-bd"/>
</dbReference>
<dbReference type="InterPro" id="IPR011194">
    <property type="entry name" value="UPF0306"/>
</dbReference>
<dbReference type="NCBIfam" id="NF002900">
    <property type="entry name" value="PRK03467.1"/>
    <property type="match status" value="1"/>
</dbReference>
<dbReference type="PIRSF" id="PIRSF009554">
    <property type="entry name" value="UCP009554"/>
    <property type="match status" value="1"/>
</dbReference>
<dbReference type="SUPFAM" id="SSF50475">
    <property type="entry name" value="FMN-binding split barrel"/>
    <property type="match status" value="1"/>
</dbReference>
<name>Y4021_YERPG</name>
<organism>
    <name type="scientific">Yersinia pestis bv. Antiqua (strain Angola)</name>
    <dbReference type="NCBI Taxonomy" id="349746"/>
    <lineage>
        <taxon>Bacteria</taxon>
        <taxon>Pseudomonadati</taxon>
        <taxon>Pseudomonadota</taxon>
        <taxon>Gammaproteobacteria</taxon>
        <taxon>Enterobacterales</taxon>
        <taxon>Yersiniaceae</taxon>
        <taxon>Yersinia</taxon>
    </lineage>
</organism>